<evidence type="ECO:0000250" key="1"/>
<evidence type="ECO:0000250" key="2">
    <source>
        <dbReference type="UniProtKB" id="Q9HCB6"/>
    </source>
</evidence>
<evidence type="ECO:0000255" key="3"/>
<evidence type="ECO:0000255" key="4">
    <source>
        <dbReference type="PROSITE-ProRule" id="PRU00210"/>
    </source>
</evidence>
<evidence type="ECO:0000255" key="5">
    <source>
        <dbReference type="PROSITE-ProRule" id="PRU00363"/>
    </source>
</evidence>
<evidence type="ECO:0000255" key="6">
    <source>
        <dbReference type="PROSITE-ProRule" id="PRU00364"/>
    </source>
</evidence>
<keyword id="KW-0130">Cell adhesion</keyword>
<keyword id="KW-1015">Disulfide bond</keyword>
<keyword id="KW-0272">Extracellular matrix</keyword>
<keyword id="KW-0325">Glycoprotein</keyword>
<keyword id="KW-0479">Metal-binding</keyword>
<keyword id="KW-1185">Reference proteome</keyword>
<keyword id="KW-0677">Repeat</keyword>
<keyword id="KW-0964">Secreted</keyword>
<keyword id="KW-0732">Signal</keyword>
<proteinExistence type="evidence at transcript level"/>
<protein>
    <recommendedName>
        <fullName>Spondin-1</fullName>
    </recommendedName>
    <alternativeName>
        <fullName>F-spondin</fullName>
    </alternativeName>
</protein>
<name>SPON1_CHICK</name>
<comment type="function">
    <text evidence="1">Cell adhesion protein that promotes the attachment of spinal cord and sensory neuron cells and the outgrowth of neurites in vitro. May contribute to the growth and guidance of axons in both the spinal cord and the PNS (By similarity). Somite-derived spondin 1 is an inhibitory signal involved in patterning the segmental migration of neural crest cells and their topographical segregation within the rostral somites in vitro. May be required to prevent the lateral drifting of the commissural axons after having crossed the floor plate.</text>
</comment>
<comment type="subcellular location">
    <subcellularLocation>
        <location evidence="1">Secreted</location>
        <location evidence="1">Extracellular space</location>
        <location evidence="1">Extracellular matrix</location>
    </subcellularLocation>
</comment>
<dbReference type="EMBL" id="AF149302">
    <property type="protein sequence ID" value="AAD41495.1"/>
    <property type="molecule type" value="mRNA"/>
</dbReference>
<dbReference type="RefSeq" id="NP_990182.1">
    <property type="nucleotide sequence ID" value="NM_204851.1"/>
</dbReference>
<dbReference type="SMR" id="Q9W770"/>
<dbReference type="FunCoup" id="Q9W770">
    <property type="interactions" value="8"/>
</dbReference>
<dbReference type="STRING" id="9031.ENSGALP00000073901"/>
<dbReference type="GlyCosmos" id="Q9W770">
    <property type="glycosylation" value="2 sites, No reported glycans"/>
</dbReference>
<dbReference type="GlyGen" id="Q9W770">
    <property type="glycosylation" value="2 sites"/>
</dbReference>
<dbReference type="PaxDb" id="9031-ENSGALP00000039229"/>
<dbReference type="GeneID" id="395657"/>
<dbReference type="KEGG" id="gga:395657"/>
<dbReference type="CTD" id="10418"/>
<dbReference type="VEuPathDB" id="HostDB:geneid_395657"/>
<dbReference type="eggNOG" id="KOG3539">
    <property type="taxonomic scope" value="Eukaryota"/>
</dbReference>
<dbReference type="InParanoid" id="Q9W770"/>
<dbReference type="OrthoDB" id="347314at2759"/>
<dbReference type="PhylomeDB" id="Q9W770"/>
<dbReference type="PRO" id="PR:Q9W770"/>
<dbReference type="Proteomes" id="UP000000539">
    <property type="component" value="Unassembled WGS sequence"/>
</dbReference>
<dbReference type="GO" id="GO:0031012">
    <property type="term" value="C:extracellular matrix"/>
    <property type="evidence" value="ECO:0000318"/>
    <property type="project" value="GO_Central"/>
</dbReference>
<dbReference type="GO" id="GO:0005576">
    <property type="term" value="C:extracellular region"/>
    <property type="evidence" value="ECO:0007669"/>
    <property type="project" value="UniProtKB-KW"/>
</dbReference>
<dbReference type="GO" id="GO:0046872">
    <property type="term" value="F:metal ion binding"/>
    <property type="evidence" value="ECO:0007669"/>
    <property type="project" value="UniProtKB-KW"/>
</dbReference>
<dbReference type="GO" id="GO:0007155">
    <property type="term" value="P:cell adhesion"/>
    <property type="evidence" value="ECO:0000318"/>
    <property type="project" value="GO_Central"/>
</dbReference>
<dbReference type="CDD" id="cd08544">
    <property type="entry name" value="Reeler"/>
    <property type="match status" value="1"/>
</dbReference>
<dbReference type="FunFam" id="2.20.100.10:FF:000026">
    <property type="entry name" value="Spondin 1"/>
    <property type="match status" value="1"/>
</dbReference>
<dbReference type="FunFam" id="2.20.100.10:FF:000013">
    <property type="entry name" value="Spondin 1a"/>
    <property type="match status" value="2"/>
</dbReference>
<dbReference type="FunFam" id="2.60.40.2130:FF:000001">
    <property type="entry name" value="Spondin 1a"/>
    <property type="match status" value="1"/>
</dbReference>
<dbReference type="FunFam" id="2.20.100.10:FF:000024">
    <property type="entry name" value="Spondin-1"/>
    <property type="match status" value="1"/>
</dbReference>
<dbReference type="FunFam" id="2.20.100.10:FF:000034">
    <property type="entry name" value="Spondin-1"/>
    <property type="match status" value="1"/>
</dbReference>
<dbReference type="FunFam" id="2.20.100.10:FF:000081">
    <property type="entry name" value="Spondin-1"/>
    <property type="match status" value="1"/>
</dbReference>
<dbReference type="FunFam" id="2.60.40.4060:FF:000002">
    <property type="entry name" value="Spondin-1"/>
    <property type="match status" value="1"/>
</dbReference>
<dbReference type="Gene3D" id="2.60.40.2130">
    <property type="entry name" value="F-spondin domain"/>
    <property type="match status" value="1"/>
</dbReference>
<dbReference type="Gene3D" id="2.60.40.4060">
    <property type="entry name" value="Reeler domain"/>
    <property type="match status" value="1"/>
</dbReference>
<dbReference type="Gene3D" id="2.20.100.10">
    <property type="entry name" value="Thrombospondin type-1 (TSP1) repeat"/>
    <property type="match status" value="6"/>
</dbReference>
<dbReference type="InterPro" id="IPR002861">
    <property type="entry name" value="Reeler_dom"/>
</dbReference>
<dbReference type="InterPro" id="IPR042307">
    <property type="entry name" value="Reeler_sf"/>
</dbReference>
<dbReference type="InterPro" id="IPR051418">
    <property type="entry name" value="Spondin/Thrombospondin_T1"/>
</dbReference>
<dbReference type="InterPro" id="IPR009465">
    <property type="entry name" value="Spondin_N"/>
</dbReference>
<dbReference type="InterPro" id="IPR038678">
    <property type="entry name" value="Spondin_N_sf"/>
</dbReference>
<dbReference type="InterPro" id="IPR000884">
    <property type="entry name" value="TSP1_rpt"/>
</dbReference>
<dbReference type="InterPro" id="IPR036383">
    <property type="entry name" value="TSP1_rpt_sf"/>
</dbReference>
<dbReference type="InterPro" id="IPR044004">
    <property type="entry name" value="TSP1_spondin_dom"/>
</dbReference>
<dbReference type="NCBIfam" id="NF038123">
    <property type="entry name" value="NF038123_dom"/>
    <property type="match status" value="1"/>
</dbReference>
<dbReference type="PANTHER" id="PTHR11311">
    <property type="entry name" value="SPONDIN"/>
    <property type="match status" value="1"/>
</dbReference>
<dbReference type="PANTHER" id="PTHR11311:SF16">
    <property type="entry name" value="SPONDIN-1"/>
    <property type="match status" value="1"/>
</dbReference>
<dbReference type="Pfam" id="PF02014">
    <property type="entry name" value="Reeler"/>
    <property type="match status" value="1"/>
</dbReference>
<dbReference type="Pfam" id="PF06468">
    <property type="entry name" value="Spond_N"/>
    <property type="match status" value="1"/>
</dbReference>
<dbReference type="Pfam" id="PF19028">
    <property type="entry name" value="TSP1_spondin"/>
    <property type="match status" value="1"/>
</dbReference>
<dbReference type="Pfam" id="PF00090">
    <property type="entry name" value="TSP_1"/>
    <property type="match status" value="5"/>
</dbReference>
<dbReference type="SMART" id="SM00209">
    <property type="entry name" value="TSP1"/>
    <property type="match status" value="6"/>
</dbReference>
<dbReference type="SUPFAM" id="SSF82895">
    <property type="entry name" value="TSP-1 type 1 repeat"/>
    <property type="match status" value="6"/>
</dbReference>
<dbReference type="PROSITE" id="PS51019">
    <property type="entry name" value="REELIN"/>
    <property type="match status" value="1"/>
</dbReference>
<dbReference type="PROSITE" id="PS51020">
    <property type="entry name" value="SPONDIN"/>
    <property type="match status" value="1"/>
</dbReference>
<dbReference type="PROSITE" id="PS50092">
    <property type="entry name" value="TSP1"/>
    <property type="match status" value="6"/>
</dbReference>
<sequence>MAARLRPLALRLLARTFPLVARGFSDETLEKAAKSEGYCSRILRAQGTRREGYNEFSLRVEGDPEFYKPGNSYRVTLSAATPAYFRGFTLIALKEGKEGDKEEDHAGTFQIIDEEETQFMSNCPVAVTESTPRRRTRIQVFWTAPPTGTGCVILKASIVQKRIIYFQDEGSLTKRICEQDSASEGVTDKPTLDCCACGTAKYRLTFYGNWSEKTHPKDFPRRTNHWSAIIGSSHSKNYILWEYGGYASEGVKQVAELGSPVKMEEEIRQQSDEVLTVIKAKAQWPAWQPLNVRAAPSAEFSVDRHRHLMSFLTMLGPSPDWNVGLSAEDLCTKDCGWVQKVVQDLIPWDAGTDSGVTYESPNKPTVPQEKIRPLTSLDHPQSPFYDPEGGSIKLVARVVLERIARKGEQCNFVPDNIDDIVADLAPEEKEEDDTPETCIYSNWSPWSACSSSTCEKGKRMRQRMLKAQLDLSVPCPDTQDFQPCMGPGCSDEDGSTCMMSDWITWSPCSVSCGMGTRSRERYVKQFPEDGSMCKVPTEETEKCIVNEECSPSSCLVTEWGEWDECSASCGTGMKRRHRMIKMTPADGSMCKAETTEAEKCMMPECHTIPCLLSPWSEWSDCSVTCGKGMRTRQRMLKSAAELGDCNEELEQAEKCMLPECPIDCELTEWSQWSECNTSCGKGHMIRTRMIKIEPQFGGTACPETVQRTKCRVRKCLRGPGMEKRRWKEAREKRRSEQAKKNIDNEQYPVCRLKPWTAWTECSTLCGGGIQERYMMVKKRSKSTQFTSCKDKKELRACNVHPC</sequence>
<accession>Q9W770</accession>
<organism>
    <name type="scientific">Gallus gallus</name>
    <name type="common">Chicken</name>
    <dbReference type="NCBI Taxonomy" id="9031"/>
    <lineage>
        <taxon>Eukaryota</taxon>
        <taxon>Metazoa</taxon>
        <taxon>Chordata</taxon>
        <taxon>Craniata</taxon>
        <taxon>Vertebrata</taxon>
        <taxon>Euteleostomi</taxon>
        <taxon>Archelosauria</taxon>
        <taxon>Archosauria</taxon>
        <taxon>Dinosauria</taxon>
        <taxon>Saurischia</taxon>
        <taxon>Theropoda</taxon>
        <taxon>Coelurosauria</taxon>
        <taxon>Aves</taxon>
        <taxon>Neognathae</taxon>
        <taxon>Galloanserae</taxon>
        <taxon>Galliformes</taxon>
        <taxon>Phasianidae</taxon>
        <taxon>Phasianinae</taxon>
        <taxon>Gallus</taxon>
    </lineage>
</organism>
<reference key="1">
    <citation type="journal article" date="1999" name="Neuron">
        <title>F-spondin, expressed in somite regions avoided by neural crest cells, mediates inhibition of distinct somite domains to neural crest migration.</title>
        <authorList>
            <person name="Debby-Brafman A."/>
            <person name="Burstyn-Cohen T."/>
            <person name="Klar A."/>
            <person name="Kalcheim C."/>
        </authorList>
    </citation>
    <scope>NUCLEOTIDE SEQUENCE [MRNA]</scope>
</reference>
<reference key="2">
    <citation type="journal article" date="1999" name="Neuron">
        <title>F-spondin is required for accurate pathfinding of commissural axons at the floor plate.</title>
        <authorList>
            <person name="Burstyn-Cohen T."/>
            <person name="Tzarfaty V."/>
            <person name="Frumkin A."/>
            <person name="Feinstein Y."/>
            <person name="Stoeckli E."/>
            <person name="Klar A."/>
        </authorList>
    </citation>
    <scope>NUCLEOTIDE SEQUENCE [MRNA]</scope>
</reference>
<gene>
    <name type="primary">SPON1</name>
</gene>
<feature type="signal peptide" evidence="1">
    <location>
        <begin position="1"/>
        <end position="23"/>
    </location>
</feature>
<feature type="chain" id="PRO_0000035868" description="Spondin-1">
    <location>
        <begin position="24"/>
        <end position="802"/>
    </location>
</feature>
<feature type="domain" description="Reelin" evidence="5">
    <location>
        <begin position="24"/>
        <end position="189"/>
    </location>
</feature>
<feature type="domain" description="Spondin" evidence="6">
    <location>
        <begin position="190"/>
        <end position="383"/>
    </location>
</feature>
<feature type="domain" description="TSP type-1 1" evidence="4">
    <location>
        <begin position="437"/>
        <end position="490"/>
    </location>
</feature>
<feature type="domain" description="TSP type-1 2" evidence="4">
    <location>
        <begin position="496"/>
        <end position="550"/>
    </location>
</feature>
<feature type="domain" description="TSP type-1 3" evidence="4">
    <location>
        <begin position="553"/>
        <end position="606"/>
    </location>
</feature>
<feature type="domain" description="TSP type-1 4" evidence="4">
    <location>
        <begin position="609"/>
        <end position="661"/>
    </location>
</feature>
<feature type="domain" description="TSP type-1 5" evidence="4">
    <location>
        <begin position="663"/>
        <end position="716"/>
    </location>
</feature>
<feature type="domain" description="TSP type-1 6" evidence="4">
    <location>
        <begin position="749"/>
        <end position="801"/>
    </location>
</feature>
<feature type="binding site" evidence="2">
    <location>
        <position position="320"/>
    </location>
    <ligand>
        <name>Ca(2+)</name>
        <dbReference type="ChEBI" id="CHEBI:29108"/>
    </ligand>
</feature>
<feature type="binding site" evidence="2">
    <location>
        <position position="349"/>
    </location>
    <ligand>
        <name>Ca(2+)</name>
        <dbReference type="ChEBI" id="CHEBI:29108"/>
    </ligand>
</feature>
<feature type="binding site" evidence="2">
    <location>
        <position position="353"/>
    </location>
    <ligand>
        <name>Ca(2+)</name>
        <dbReference type="ChEBI" id="CHEBI:29108"/>
    </ligand>
</feature>
<feature type="glycosylation site" description="N-linked (GlcNAc...) asparagine" evidence="3">
    <location>
        <position position="209"/>
    </location>
</feature>
<feature type="glycosylation site" description="N-linked (GlcNAc...) asparagine" evidence="3">
    <location>
        <position position="676"/>
    </location>
</feature>
<feature type="disulfide bond" evidence="4">
    <location>
        <begin position="39"/>
        <end position="123"/>
    </location>
</feature>
<feature type="disulfide bond" evidence="4">
    <location>
        <begin position="151"/>
        <end position="177"/>
    </location>
</feature>
<feature type="disulfide bond" evidence="2">
    <location>
        <begin position="194"/>
        <end position="331"/>
    </location>
</feature>
<feature type="disulfide bond" evidence="2">
    <location>
        <begin position="195"/>
        <end position="335"/>
    </location>
</feature>
<feature type="disulfide bond" evidence="2">
    <location>
        <begin position="197"/>
        <end position="410"/>
    </location>
</feature>
<feature type="disulfide bond" evidence="4">
    <location>
        <begin position="438"/>
        <end position="475"/>
    </location>
</feature>
<feature type="disulfide bond" evidence="4">
    <location>
        <begin position="449"/>
        <end position="484"/>
    </location>
</feature>
<feature type="disulfide bond" evidence="4">
    <location>
        <begin position="454"/>
        <end position="489"/>
    </location>
</feature>
<feature type="disulfide bond" evidence="4">
    <location>
        <begin position="497"/>
        <end position="533"/>
    </location>
</feature>
<feature type="disulfide bond" evidence="4">
    <location>
        <begin position="508"/>
        <end position="512"/>
    </location>
</feature>
<feature type="disulfide bond" evidence="4">
    <location>
        <begin position="543"/>
        <end position="549"/>
    </location>
</feature>
<feature type="disulfide bond" evidence="4">
    <location>
        <begin position="554"/>
        <end position="590"/>
    </location>
</feature>
<feature type="disulfide bond" evidence="4">
    <location>
        <begin position="565"/>
        <end position="569"/>
    </location>
</feature>
<feature type="disulfide bond" evidence="4">
    <location>
        <begin position="600"/>
        <end position="605"/>
    </location>
</feature>
<feature type="disulfide bond" evidence="4">
    <location>
        <begin position="610"/>
        <end position="645"/>
    </location>
</feature>
<feature type="disulfide bond" evidence="4">
    <location>
        <begin position="621"/>
        <end position="625"/>
    </location>
</feature>
<feature type="disulfide bond" evidence="4">
    <location>
        <begin position="655"/>
        <end position="660"/>
    </location>
</feature>